<comment type="function">
    <text evidence="1">Does not elicit gross behavioral symptoms when injected centrally or peripherally in mice.</text>
</comment>
<comment type="subcellular location">
    <subcellularLocation>
        <location>Secreted</location>
    </subcellularLocation>
</comment>
<comment type="tissue specificity">
    <text>Expressed by the venom duct.</text>
</comment>
<comment type="domain">
    <text>The cysteine framework is C-C.</text>
</comment>
<comment type="mass spectrometry" mass="853.19" method="LSI" evidence="1"/>
<dbReference type="PIR" id="A58512">
    <property type="entry name" value="A58512"/>
</dbReference>
<dbReference type="ConoServer" id="3552">
    <property type="toxin name" value="Bromoheptapeptide Im"/>
</dbReference>
<dbReference type="GO" id="GO:0005576">
    <property type="term" value="C:extracellular region"/>
    <property type="evidence" value="ECO:0007669"/>
    <property type="project" value="UniProtKB-SubCell"/>
</dbReference>
<dbReference type="GO" id="GO:0090729">
    <property type="term" value="F:toxin activity"/>
    <property type="evidence" value="ECO:0007669"/>
    <property type="project" value="UniProtKB-KW"/>
</dbReference>
<accession>P58803</accession>
<organism>
    <name type="scientific">Conus imperialis</name>
    <name type="common">Imperial cone</name>
    <dbReference type="NCBI Taxonomy" id="35631"/>
    <lineage>
        <taxon>Eukaryota</taxon>
        <taxon>Metazoa</taxon>
        <taxon>Spiralia</taxon>
        <taxon>Lophotrochozoa</taxon>
        <taxon>Mollusca</taxon>
        <taxon>Gastropoda</taxon>
        <taxon>Caenogastropoda</taxon>
        <taxon>Neogastropoda</taxon>
        <taxon>Conoidea</taxon>
        <taxon>Conidae</taxon>
        <taxon>Conus</taxon>
        <taxon>Stephanoconus</taxon>
    </lineage>
</organism>
<evidence type="ECO:0000269" key="1">
    <source>
    </source>
</evidence>
<sequence length="7" mass="795">QCGQAWC</sequence>
<reference key="1">
    <citation type="journal article" date="1997" name="J. Biol. Chem.">
        <title>A novel post-translational modification involving bromination of tryptophan. Identification of the residue, L-6-bromotryptophan, in peptides from Conus imperialis and Conus radiatus venom.</title>
        <authorList>
            <person name="Craig A.G."/>
            <person name="Jimenez E.C."/>
            <person name="Dykert J."/>
            <person name="Nielsen D.B."/>
            <person name="Gulyas J."/>
            <person name="Abogadie F.C."/>
            <person name="Porter J."/>
            <person name="Rivier J.E."/>
            <person name="Cruz L.J."/>
            <person name="Olivera B.M."/>
            <person name="McIntosh J.M."/>
        </authorList>
    </citation>
    <scope>PROTEIN SEQUENCE</scope>
    <scope>SYNTHESIS</scope>
    <scope>FUNCTION</scope>
    <scope>PYROGLUTAMATE FORMATION AT GLN-1</scope>
    <scope>BROMINATION AT TRP-6</scope>
    <scope>AMIDATION AT CYS-7</scope>
    <scope>MASS SPECTROMETRY</scope>
    <source>
        <tissue>Venom</tissue>
    </source>
</reference>
<name>BRHP_CONIM</name>
<feature type="peptide" id="PRO_0000044512" description="Bromoheptapeptide Im">
    <location>
        <begin position="1"/>
        <end position="7"/>
    </location>
</feature>
<feature type="modified residue" description="Pyrrolidone carboxylic acid" evidence="1">
    <location>
        <position position="1"/>
    </location>
</feature>
<feature type="modified residue" description="6'-bromotryptophan" evidence="1">
    <location>
        <position position="6"/>
    </location>
</feature>
<feature type="modified residue" description="Cysteine amide" evidence="1">
    <location>
        <position position="7"/>
    </location>
</feature>
<feature type="disulfide bond">
    <location>
        <begin position="2"/>
        <end position="7"/>
    </location>
</feature>
<keyword id="KW-0027">Amidation</keyword>
<keyword id="KW-0102">Bromination</keyword>
<keyword id="KW-0903">Direct protein sequencing</keyword>
<keyword id="KW-1015">Disulfide bond</keyword>
<keyword id="KW-0873">Pyrrolidone carboxylic acid</keyword>
<keyword id="KW-0964">Secreted</keyword>
<keyword id="KW-0800">Toxin</keyword>
<proteinExistence type="evidence at protein level"/>
<protein>
    <recommendedName>
        <fullName>Bromoheptapeptide Im</fullName>
    </recommendedName>
</protein>